<protein>
    <recommendedName>
        <fullName>Chorismate pyruvate-lyase</fullName>
        <shortName>CL</shortName>
        <shortName>CPL</shortName>
        <ecNumber evidence="2 5">4.1.3.40</ecNumber>
    </recommendedName>
</protein>
<keyword id="KW-0002">3D-structure</keyword>
<keyword id="KW-0963">Cytoplasm</keyword>
<keyword id="KW-0903">Direct protein sequencing</keyword>
<keyword id="KW-0456">Lyase</keyword>
<keyword id="KW-1185">Reference proteome</keyword>
<keyword id="KW-0831">Ubiquinone biosynthesis</keyword>
<sequence>MSHPALTQLRALRYCKEIPALDPQLLDWLLLEDSMTKRFEQQGKTVSVTMIREGFVEQNEIPEELPLLPKESRYWLREILLCADGEPWLAGRTVVPVSTLSGPELALQKLGKTPLGRYLFTSSTLTRDFIEIGRDAGLWGRRSRLRLSGKPLLLTELFLPASPLY</sequence>
<organism>
    <name type="scientific">Escherichia coli (strain K12)</name>
    <dbReference type="NCBI Taxonomy" id="83333"/>
    <lineage>
        <taxon>Bacteria</taxon>
        <taxon>Pseudomonadati</taxon>
        <taxon>Pseudomonadota</taxon>
        <taxon>Gammaproteobacteria</taxon>
        <taxon>Enterobacterales</taxon>
        <taxon>Enterobacteriaceae</taxon>
        <taxon>Escherichia</taxon>
    </lineage>
</organism>
<proteinExistence type="evidence at protein level"/>
<comment type="function">
    <text evidence="2 3 4 5">Removes the pyruvyl group from chorismate, with concomitant aromatization of the ring, to provide 4-hydroxybenzoate (4HB) for the ubiquinone pathway.</text>
</comment>
<comment type="catalytic activity">
    <reaction evidence="2 5">
        <text>chorismate = 4-hydroxybenzoate + pyruvate</text>
        <dbReference type="Rhea" id="RHEA:16505"/>
        <dbReference type="ChEBI" id="CHEBI:15361"/>
        <dbReference type="ChEBI" id="CHEBI:17879"/>
        <dbReference type="ChEBI" id="CHEBI:29748"/>
        <dbReference type="EC" id="4.1.3.40"/>
    </reaction>
</comment>
<comment type="activity regulation">
    <text evidence="2 3">Inhibited by 4-hydroxybenzoate, vanillate, 4-hydroxybenzaldehyde and 3-carboxymethylaminomethyl-4-hydroxybenzoic acid.</text>
</comment>
<comment type="biophysicochemical properties">
    <kinetics>
        <KM evidence="5">6.1 uM for chorismate</KM>
        <KM evidence="2">29 uM for chorismate</KM>
    </kinetics>
    <phDependence>
        <text evidence="2 5">Optimum pH is 7.5.</text>
    </phDependence>
</comment>
<comment type="pathway">
    <text>Cofactor biosynthesis; ubiquinone biosynthesis.</text>
</comment>
<comment type="subunit">
    <text evidence="1 3">Monomer.</text>
</comment>
<comment type="interaction">
    <interactant intactId="EBI-559360">
        <id>P26602</id>
    </interactant>
    <interactant intactId="EBI-542683">
        <id>P0AFG8</id>
        <label>aceE</label>
    </interactant>
    <organismsDiffer>false</organismsDiffer>
    <experiments>2</experiments>
</comment>
<comment type="subcellular location">
    <subcellularLocation>
        <location>Cytoplasm</location>
    </subcellularLocation>
</comment>
<comment type="miscellaneous">
    <text evidence="7">The sdgG mutation, which suppresses a conditional mutation in dnaG (DNA primase), has been localized to one of the ubiA, ubiC or yjbI genes.</text>
</comment>
<comment type="similarity">
    <text evidence="6">Belongs to the UbiC family.</text>
</comment>
<comment type="sequence caution" evidence="6">
    <conflict type="erroneous initiation">
        <sequence resource="EMBL-CDS" id="AAC43133"/>
    </conflict>
    <text>Extended N-terminus.</text>
</comment>
<comment type="sequence caution" evidence="6">
    <conflict type="erroneous initiation">
        <sequence resource="EMBL-CDS" id="CAA40681"/>
    </conflict>
    <text>Extended N-terminus.</text>
</comment>
<evidence type="ECO:0000269" key="1">
    <source>
    </source>
</evidence>
<evidence type="ECO:0000269" key="2">
    <source>
    </source>
</evidence>
<evidence type="ECO:0000269" key="3">
    <source>
    </source>
</evidence>
<evidence type="ECO:0000269" key="4">
    <source>
    </source>
</evidence>
<evidence type="ECO:0000269" key="5">
    <source>
    </source>
</evidence>
<evidence type="ECO:0000305" key="6"/>
<evidence type="ECO:0000305" key="7">
    <source>
    </source>
</evidence>
<evidence type="ECO:0007829" key="8">
    <source>
        <dbReference type="PDB" id="1G1B"/>
    </source>
</evidence>
<evidence type="ECO:0007829" key="9">
    <source>
        <dbReference type="PDB" id="1G81"/>
    </source>
</evidence>
<evidence type="ECO:0007829" key="10">
    <source>
        <dbReference type="PDB" id="1TT8"/>
    </source>
</evidence>
<evidence type="ECO:0007829" key="11">
    <source>
        <dbReference type="PDB" id="2AHC"/>
    </source>
</evidence>
<reference key="1">
    <citation type="journal article" date="1992" name="FEBS Lett.">
        <title>Ubiquinone biosynthesis. Cloning of the genes coding for chorismate pyruvate-lyase and 4-hydroxybenzoate octaprenyl transferase from Escherichia coli.</title>
        <authorList>
            <person name="Siebert M."/>
            <person name="Bechthold A."/>
            <person name="Melzer M."/>
            <person name="May U."/>
            <person name="Berger U."/>
            <person name="Schroeder G."/>
            <person name="Schroeder J."/>
            <person name="Severin K."/>
            <person name="Heide L."/>
        </authorList>
    </citation>
    <scope>NUCLEOTIDE SEQUENCE [GENOMIC DNA]</scope>
    <source>
        <strain>K12 / MC4100 / ATCC 35695 / DSM 6574</strain>
    </source>
</reference>
<reference key="2">
    <citation type="journal article" date="1992" name="J. Bacteriol.">
        <title>Cloning and sequencing of Escherichia coli ubiC and purification of chorismate lyase.</title>
        <authorList>
            <person name="Nichols B.P."/>
            <person name="Green J.M."/>
        </authorList>
    </citation>
    <scope>NUCLEOTIDE SEQUENCE [GENOMIC DNA]</scope>
    <scope>PROTEIN SEQUENCE OF 2-21</scope>
    <scope>FUNCTION</scope>
    <source>
        <strain>K12</strain>
    </source>
</reference>
<reference key="3">
    <citation type="journal article" date="1992" name="J. Bacteriol.">
        <title>Location of the ubiA gene on the physical map of Escherichia coli.</title>
        <authorList>
            <person name="Nishimura K."/>
            <person name="Nakahigashi K."/>
            <person name="Inokuchi H."/>
        </authorList>
    </citation>
    <scope>NUCLEOTIDE SEQUENCE [GENOMIC DNA]</scope>
    <source>
        <strain>K12 / W3110 / ATCC 27325 / DSM 5911</strain>
    </source>
</reference>
<reference key="4">
    <citation type="journal article" date="1993" name="J. Gen. Microbiol.">
        <title>Mutants of Escherichia coli affected in respiration: the cloning and nucleotide sequence of ubiA, encoding the membrane-bound p-hydroxybenzoate:octaprenyltransferase.</title>
        <authorList>
            <person name="Wu G."/>
            <person name="Williams H.D."/>
            <person name="Gibson F."/>
            <person name="Poole R.K."/>
        </authorList>
    </citation>
    <scope>NUCLEOTIDE SEQUENCE [GENOMIC DNA]</scope>
    <source>
        <strain>K12</strain>
    </source>
</reference>
<reference key="5">
    <citation type="submission" date="2005-06" db="EMBL/GenBank/DDBJ databases">
        <authorList>
            <person name="Zhang D."/>
            <person name="Shrestha B."/>
            <person name="Tan T."/>
        </authorList>
    </citation>
    <scope>NUCLEOTIDE SEQUENCE [GENOMIC DNA]</scope>
    <source>
        <strain>BL21</strain>
    </source>
</reference>
<reference key="6">
    <citation type="journal article" date="1993" name="Nucleic Acids Res.">
        <title>Analysis of the Escherichia coli genome. IV. DNA sequence of the region from 89.2 to 92.8 minutes.</title>
        <authorList>
            <person name="Blattner F.R."/>
            <person name="Burland V.D."/>
            <person name="Plunkett G. III"/>
            <person name="Sofia H.J."/>
            <person name="Daniels D.L."/>
        </authorList>
    </citation>
    <scope>NUCLEOTIDE SEQUENCE [LARGE SCALE GENOMIC DNA]</scope>
    <source>
        <strain>K12 / MG1655 / ATCC 47076</strain>
    </source>
</reference>
<reference key="7">
    <citation type="journal article" date="1997" name="Science">
        <title>The complete genome sequence of Escherichia coli K-12.</title>
        <authorList>
            <person name="Blattner F.R."/>
            <person name="Plunkett G. III"/>
            <person name="Bloch C.A."/>
            <person name="Perna N.T."/>
            <person name="Burland V."/>
            <person name="Riley M."/>
            <person name="Collado-Vides J."/>
            <person name="Glasner J.D."/>
            <person name="Rode C.K."/>
            <person name="Mayhew G.F."/>
            <person name="Gregor J."/>
            <person name="Davis N.W."/>
            <person name="Kirkpatrick H.A."/>
            <person name="Goeden M.A."/>
            <person name="Rose D.J."/>
            <person name="Mau B."/>
            <person name="Shao Y."/>
        </authorList>
    </citation>
    <scope>NUCLEOTIDE SEQUENCE [LARGE SCALE GENOMIC DNA]</scope>
    <source>
        <strain>K12 / MG1655 / ATCC 47076</strain>
    </source>
</reference>
<reference key="8">
    <citation type="journal article" date="2006" name="Mol. Syst. Biol.">
        <title>Highly accurate genome sequences of Escherichia coli K-12 strains MG1655 and W3110.</title>
        <authorList>
            <person name="Hayashi K."/>
            <person name="Morooka N."/>
            <person name="Yamamoto Y."/>
            <person name="Fujita K."/>
            <person name="Isono K."/>
            <person name="Choi S."/>
            <person name="Ohtsubo E."/>
            <person name="Baba T."/>
            <person name="Wanner B.L."/>
            <person name="Mori H."/>
            <person name="Horiuchi T."/>
        </authorList>
    </citation>
    <scope>NUCLEOTIDE SEQUENCE [LARGE SCALE GENOMIC DNA]</scope>
    <source>
        <strain>K12 / W3110 / ATCC 27325 / DSM 5911</strain>
    </source>
</reference>
<reference key="9">
    <citation type="journal article" date="1994" name="Microbiology">
        <title>Formation of 4-hydroxybenzoate in Escherichia coli: characterization of the ubiC gene and its encoded enzyme chorismate pyruvate-lyase.</title>
        <authorList>
            <person name="Siebert M."/>
            <person name="Severin K."/>
            <person name="Heide L."/>
        </authorList>
    </citation>
    <scope>FUNCTION</scope>
    <scope>CATALYTIC ACTIVITY</scope>
    <scope>BIOPHYSICOCHEMICAL PROPERTIES</scope>
    <scope>MUTAGENESIS OF GLU-156</scope>
</reference>
<reference key="10">
    <citation type="journal article" date="1997" name="Genetics">
        <title>Isolation and characterization of suppressors of two Escherichia coli dnaG mutations, dnaG2903 and parB.</title>
        <authorList>
            <person name="Britton R.A."/>
            <person name="Lupski J.R."/>
        </authorList>
    </citation>
    <scope>POSSIBLE GENETIC INTERACTION WITH DNAG</scope>
</reference>
<reference key="11">
    <citation type="journal article" date="2002" name="Biochim. Biophys. Acta">
        <title>Chorismate lyase: kinetics and engineering for stability.</title>
        <authorList>
            <person name="Holden M.J."/>
            <person name="Mayhew M.P."/>
            <person name="Gallagher D.T."/>
            <person name="Vilker V.L."/>
        </authorList>
    </citation>
    <scope>FUNCTION</scope>
    <scope>CATALYTIC ACTIVITY</scope>
    <scope>BIOPHYSICOCHEMICAL PROPERTIES</scope>
    <scope>ACTIVITY REGULATION</scope>
    <source>
        <strain>K12 / MG1655 / ATCC 47076</strain>
    </source>
</reference>
<reference key="12">
    <citation type="journal article" date="2000" name="J. Struct. Biol.">
        <title>Crystallization and 1.1-A diffraction of chorismate lyase from Escherichia coli.</title>
        <authorList>
            <person name="Stover C."/>
            <person name="Mayhew M.P."/>
            <person name="Holden M.J."/>
            <person name="Howard A."/>
            <person name="Gallagher D.T."/>
        </authorList>
    </citation>
    <scope>X-RAY CRYSTALLOGRAPHY (1.1 ANGSTROMS)</scope>
</reference>
<reference key="13">
    <citation type="journal article" date="2001" name="Proteins">
        <title>The crystal structure of chorismate lyase shows a new fold and a tightly retained product.</title>
        <authorList>
            <person name="Gallagher D.T."/>
            <person name="Mayhew M."/>
            <person name="Holden M.J."/>
            <person name="Howard A."/>
            <person name="Kim K.-J."/>
            <person name="Vilker V.L."/>
        </authorList>
    </citation>
    <scope>X-RAY CRYSTALLOGRAPHY (1.4 ANGSTROMS) IN COMPLEX WITH PRODUCT; MUTANT SER-15/SER-82 IN COMPLEX WITH PRODUCT; MUTANT SER-15 IN COMPLEX WITH PRODUCT</scope>
    <scope>SUBUNIT</scope>
</reference>
<reference key="14">
    <citation type="journal article" date="2006" name="Arch. Biochem. Biophys.">
        <title>Structural analysis of ligand binding and catalysis in chorismate lyase.</title>
        <authorList>
            <person name="Smith N."/>
            <person name="Roitberg A.E."/>
            <person name="Rivera E."/>
            <person name="Howard A."/>
            <person name="Holden M.J."/>
            <person name="Mayhew M."/>
            <person name="Kaistha S."/>
            <person name="Gallagher D.T."/>
        </authorList>
    </citation>
    <scope>X-RAY CRYSTALLOGRAPHY (1.0 ANGSTROMS) OF MUTANT SER-15/SER-82 IN COMPLEXES WITH PRODUCT AND SUBSTRATE ANALOG; MUTANT SER-15/SER-82/ALA-91 IN COMPLEXES WITH PRODUCT AND SUBSTRATE ANALOG</scope>
    <scope>FUNCTION</scope>
    <scope>MUTAGENESIS OF GLY-91</scope>
    <scope>ACTIVITY REGULATION</scope>
    <scope>SUBUNIT</scope>
</reference>
<name>UBIC_ECOLI</name>
<gene>
    <name type="primary">ubiC</name>
    <name type="ordered locus">b4039</name>
    <name type="ordered locus">JW5713</name>
</gene>
<dbReference type="EC" id="4.1.3.40" evidence="2 5"/>
<dbReference type="EMBL" id="X66619">
    <property type="protein sequence ID" value="CAA47181.1"/>
    <property type="molecule type" value="Genomic_DNA"/>
</dbReference>
<dbReference type="EMBL" id="M93136">
    <property type="protein sequence ID" value="AAA24711.1"/>
    <property type="molecule type" value="Genomic_DNA"/>
</dbReference>
<dbReference type="EMBL" id="M93413">
    <property type="protein sequence ID" value="AAA24716.1"/>
    <property type="molecule type" value="Genomic_DNA"/>
</dbReference>
<dbReference type="EMBL" id="X57434">
    <property type="protein sequence ID" value="CAA40681.1"/>
    <property type="status" value="ALT_INIT"/>
    <property type="molecule type" value="Genomic_DNA"/>
</dbReference>
<dbReference type="EMBL" id="M96268">
    <property type="protein sequence ID" value="AAA17027.1"/>
    <property type="molecule type" value="Unassigned_DNA"/>
</dbReference>
<dbReference type="EMBL" id="DQ087228">
    <property type="protein sequence ID" value="AAY88959.1"/>
    <property type="molecule type" value="Genomic_DNA"/>
</dbReference>
<dbReference type="EMBL" id="U00006">
    <property type="protein sequence ID" value="AAC43133.1"/>
    <property type="status" value="ALT_INIT"/>
    <property type="molecule type" value="Genomic_DNA"/>
</dbReference>
<dbReference type="EMBL" id="U00096">
    <property type="protein sequence ID" value="AAC77009.2"/>
    <property type="molecule type" value="Genomic_DNA"/>
</dbReference>
<dbReference type="EMBL" id="AP009048">
    <property type="protein sequence ID" value="BAE78041.1"/>
    <property type="molecule type" value="Genomic_DNA"/>
</dbReference>
<dbReference type="PIR" id="S25660">
    <property type="entry name" value="S25660"/>
</dbReference>
<dbReference type="RefSeq" id="NP_418463.4">
    <property type="nucleotide sequence ID" value="NC_000913.3"/>
</dbReference>
<dbReference type="RefSeq" id="WP_001326644.1">
    <property type="nucleotide sequence ID" value="NZ_SSZK01000016.1"/>
</dbReference>
<dbReference type="PDB" id="1FW9">
    <property type="method" value="X-ray"/>
    <property type="resolution" value="1.40 A"/>
    <property type="chains" value="A=2-165"/>
</dbReference>
<dbReference type="PDB" id="1G1B">
    <property type="method" value="X-ray"/>
    <property type="resolution" value="1.99 A"/>
    <property type="chains" value="A/B=2-165"/>
</dbReference>
<dbReference type="PDB" id="1G81">
    <property type="method" value="X-ray"/>
    <property type="resolution" value="1.71 A"/>
    <property type="chains" value="A=2-165"/>
</dbReference>
<dbReference type="PDB" id="1JD3">
    <property type="method" value="X-ray"/>
    <property type="resolution" value="2.03 A"/>
    <property type="chains" value="A=2-165"/>
</dbReference>
<dbReference type="PDB" id="1TT8">
    <property type="method" value="X-ray"/>
    <property type="resolution" value="1.00 A"/>
    <property type="chains" value="A=2-165"/>
</dbReference>
<dbReference type="PDB" id="1XLR">
    <property type="method" value="X-ray"/>
    <property type="resolution" value="1.94 A"/>
    <property type="chains" value="A=2-165"/>
</dbReference>
<dbReference type="PDB" id="2AHC">
    <property type="method" value="X-ray"/>
    <property type="resolution" value="2.40 A"/>
    <property type="chains" value="A/B/C/D=2-165"/>
</dbReference>
<dbReference type="PDBsum" id="1FW9"/>
<dbReference type="PDBsum" id="1G1B"/>
<dbReference type="PDBsum" id="1G81"/>
<dbReference type="PDBsum" id="1JD3"/>
<dbReference type="PDBsum" id="1TT8"/>
<dbReference type="PDBsum" id="1XLR"/>
<dbReference type="PDBsum" id="2AHC"/>
<dbReference type="SMR" id="P26602"/>
<dbReference type="BioGRID" id="4262658">
    <property type="interactions" value="215"/>
</dbReference>
<dbReference type="BioGRID" id="852839">
    <property type="interactions" value="1"/>
</dbReference>
<dbReference type="DIP" id="DIP-11066N"/>
<dbReference type="FunCoup" id="P26602">
    <property type="interactions" value="202"/>
</dbReference>
<dbReference type="IntAct" id="P26602">
    <property type="interactions" value="3"/>
</dbReference>
<dbReference type="STRING" id="511145.b4039"/>
<dbReference type="DrugBank" id="DB04242">
    <property type="generic name" value="4-hydroxybenzoic acid"/>
</dbReference>
<dbReference type="DrugBank" id="DB02130">
    <property type="generic name" value="Vanillic acid"/>
</dbReference>
<dbReference type="jPOST" id="P26602"/>
<dbReference type="PaxDb" id="511145-b4039"/>
<dbReference type="EnsemblBacteria" id="AAC77009">
    <property type="protein sequence ID" value="AAC77009"/>
    <property type="gene ID" value="b4039"/>
</dbReference>
<dbReference type="GeneID" id="948545"/>
<dbReference type="KEGG" id="ecj:JW5713"/>
<dbReference type="KEGG" id="eco:b4039"/>
<dbReference type="KEGG" id="ecoc:C3026_21830"/>
<dbReference type="PATRIC" id="fig|511145.12.peg.4156"/>
<dbReference type="EchoBASE" id="EB1343"/>
<dbReference type="eggNOG" id="COG3161">
    <property type="taxonomic scope" value="Bacteria"/>
</dbReference>
<dbReference type="HOGENOM" id="CLU_096824_1_0_6"/>
<dbReference type="InParanoid" id="P26602"/>
<dbReference type="OMA" id="ELWGRRS"/>
<dbReference type="OrthoDB" id="9789493at2"/>
<dbReference type="PhylomeDB" id="P26602"/>
<dbReference type="BioCyc" id="EcoCyc:CHORPYRLY-MONOMER"/>
<dbReference type="BioCyc" id="MetaCyc:CHORPYRLY-MONOMER"/>
<dbReference type="BRENDA" id="4.1.3.40">
    <property type="organism ID" value="2026"/>
</dbReference>
<dbReference type="SABIO-RK" id="P26602"/>
<dbReference type="UniPathway" id="UPA00232"/>
<dbReference type="EvolutionaryTrace" id="P26602"/>
<dbReference type="PRO" id="PR:P26602"/>
<dbReference type="Proteomes" id="UP000000625">
    <property type="component" value="Chromosome"/>
</dbReference>
<dbReference type="GO" id="GO:0005829">
    <property type="term" value="C:cytosol"/>
    <property type="evidence" value="ECO:0000314"/>
    <property type="project" value="EcoCyc"/>
</dbReference>
<dbReference type="GO" id="GO:0008813">
    <property type="term" value="F:chorismate lyase activity"/>
    <property type="evidence" value="ECO:0000314"/>
    <property type="project" value="EcoCyc"/>
</dbReference>
<dbReference type="GO" id="GO:0042866">
    <property type="term" value="P:pyruvate biosynthetic process"/>
    <property type="evidence" value="ECO:0007669"/>
    <property type="project" value="UniProtKB-UniRule"/>
</dbReference>
<dbReference type="GO" id="GO:0006744">
    <property type="term" value="P:ubiquinone biosynthetic process"/>
    <property type="evidence" value="ECO:0000315"/>
    <property type="project" value="EcoCyc"/>
</dbReference>
<dbReference type="FunFam" id="3.40.1410.10:FF:000002">
    <property type="entry name" value="Chorismate pyruvate-lyase"/>
    <property type="match status" value="1"/>
</dbReference>
<dbReference type="Gene3D" id="3.40.1410.10">
    <property type="entry name" value="Chorismate lyase-like"/>
    <property type="match status" value="1"/>
</dbReference>
<dbReference type="HAMAP" id="MF_01632">
    <property type="entry name" value="UbiC"/>
    <property type="match status" value="1"/>
</dbReference>
<dbReference type="InterPro" id="IPR007440">
    <property type="entry name" value="Chorismate--pyruvate_lyase"/>
</dbReference>
<dbReference type="InterPro" id="IPR028978">
    <property type="entry name" value="Chorismate_lyase_/UTRA_dom_sf"/>
</dbReference>
<dbReference type="NCBIfam" id="NF008656">
    <property type="entry name" value="PRK11655.1"/>
    <property type="match status" value="1"/>
</dbReference>
<dbReference type="PANTHER" id="PTHR38683">
    <property type="entry name" value="CHORISMATE PYRUVATE-LYASE"/>
    <property type="match status" value="1"/>
</dbReference>
<dbReference type="PANTHER" id="PTHR38683:SF1">
    <property type="entry name" value="CHORISMATE PYRUVATE-LYASE"/>
    <property type="match status" value="1"/>
</dbReference>
<dbReference type="Pfam" id="PF04345">
    <property type="entry name" value="Chor_lyase"/>
    <property type="match status" value="1"/>
</dbReference>
<dbReference type="SUPFAM" id="SSF64288">
    <property type="entry name" value="Chorismate lyase-like"/>
    <property type="match status" value="1"/>
</dbReference>
<accession>P26602</accession>
<accession>P76783</accession>
<accession>Q2M6R5</accession>
<accession>Q4JHR8</accession>
<feature type="initiator methionine" description="Removed" evidence="4">
    <location>
        <position position="1"/>
    </location>
</feature>
<feature type="chain" id="PRO_0000065711" description="Chorismate pyruvate-lyase">
    <location>
        <begin position="2"/>
        <end position="165"/>
    </location>
</feature>
<feature type="binding site" evidence="1 3">
    <location>
        <position position="35"/>
    </location>
    <ligand>
        <name>substrate</name>
    </ligand>
</feature>
<feature type="binding site" evidence="1 3">
    <location>
        <position position="77"/>
    </location>
    <ligand>
        <name>substrate</name>
    </ligand>
</feature>
<feature type="binding site" evidence="1 3">
    <location>
        <position position="115"/>
    </location>
    <ligand>
        <name>substrate</name>
    </ligand>
</feature>
<feature type="binding site" evidence="1 3">
    <location>
        <position position="156"/>
    </location>
    <ligand>
        <name>substrate</name>
    </ligand>
</feature>
<feature type="mutagenesis site" description="Increases the inhibition by product by about 40%. No effect on substrate affinity." evidence="3">
    <original>G</original>
    <variation>A</variation>
    <location>
        <position position="91"/>
    </location>
</feature>
<feature type="mutagenesis site" description="Loss of activity." evidence="5">
    <original>E</original>
    <variation>K</variation>
    <location>
        <position position="156"/>
    </location>
</feature>
<feature type="helix" evidence="10">
    <location>
        <begin position="4"/>
        <end position="11"/>
    </location>
</feature>
<feature type="strand" evidence="8">
    <location>
        <begin position="13"/>
        <end position="17"/>
    </location>
</feature>
<feature type="helix" evidence="10">
    <location>
        <begin position="23"/>
        <end position="30"/>
    </location>
</feature>
<feature type="helix" evidence="10">
    <location>
        <begin position="36"/>
        <end position="40"/>
    </location>
</feature>
<feature type="turn" evidence="10">
    <location>
        <begin position="41"/>
        <end position="43"/>
    </location>
</feature>
<feature type="strand" evidence="10">
    <location>
        <begin position="46"/>
        <end position="56"/>
    </location>
</feature>
<feature type="helix" evidence="10">
    <location>
        <begin position="58"/>
        <end position="60"/>
    </location>
</feature>
<feature type="turn" evidence="10">
    <location>
        <begin position="62"/>
        <end position="64"/>
    </location>
</feature>
<feature type="helix" evidence="10">
    <location>
        <begin position="65"/>
        <end position="67"/>
    </location>
</feature>
<feature type="strand" evidence="10">
    <location>
        <begin position="74"/>
        <end position="83"/>
    </location>
</feature>
<feature type="strand" evidence="10">
    <location>
        <begin position="86"/>
        <end position="96"/>
    </location>
</feature>
<feature type="helix" evidence="10">
    <location>
        <begin position="97"/>
        <end position="99"/>
    </location>
</feature>
<feature type="helix" evidence="10">
    <location>
        <begin position="102"/>
        <end position="108"/>
    </location>
</feature>
<feature type="strand" evidence="11">
    <location>
        <begin position="111"/>
        <end position="113"/>
    </location>
</feature>
<feature type="helix" evidence="10">
    <location>
        <begin position="117"/>
        <end position="119"/>
    </location>
</feature>
<feature type="strand" evidence="9">
    <location>
        <begin position="121"/>
        <end position="123"/>
    </location>
</feature>
<feature type="strand" evidence="10">
    <location>
        <begin position="125"/>
        <end position="135"/>
    </location>
</feature>
<feature type="strand" evidence="10">
    <location>
        <begin position="138"/>
        <end position="147"/>
    </location>
</feature>
<feature type="strand" evidence="10">
    <location>
        <begin position="150"/>
        <end position="158"/>
    </location>
</feature>